<dbReference type="EC" id="5.6.2.4"/>
<dbReference type="EMBL" id="BA000017">
    <property type="protein sequence ID" value="BAB58067.1"/>
    <property type="molecule type" value="Genomic_DNA"/>
</dbReference>
<dbReference type="RefSeq" id="WP_000992924.1">
    <property type="nucleotide sequence ID" value="NC_002758.2"/>
</dbReference>
<dbReference type="SMR" id="P64318"/>
<dbReference type="KEGG" id="sav:SAV1905"/>
<dbReference type="HOGENOM" id="CLU_004585_5_2_9"/>
<dbReference type="PhylomeDB" id="P64318"/>
<dbReference type="Proteomes" id="UP000002481">
    <property type="component" value="Chromosome"/>
</dbReference>
<dbReference type="GO" id="GO:0005829">
    <property type="term" value="C:cytosol"/>
    <property type="evidence" value="ECO:0007669"/>
    <property type="project" value="TreeGrafter"/>
</dbReference>
<dbReference type="GO" id="GO:0033202">
    <property type="term" value="C:DNA helicase complex"/>
    <property type="evidence" value="ECO:0007669"/>
    <property type="project" value="TreeGrafter"/>
</dbReference>
<dbReference type="GO" id="GO:0043138">
    <property type="term" value="F:3'-5' DNA helicase activity"/>
    <property type="evidence" value="ECO:0007669"/>
    <property type="project" value="TreeGrafter"/>
</dbReference>
<dbReference type="GO" id="GO:0005524">
    <property type="term" value="F:ATP binding"/>
    <property type="evidence" value="ECO:0007669"/>
    <property type="project" value="UniProtKB-KW"/>
</dbReference>
<dbReference type="GO" id="GO:0016887">
    <property type="term" value="F:ATP hydrolysis activity"/>
    <property type="evidence" value="ECO:0007669"/>
    <property type="project" value="RHEA"/>
</dbReference>
<dbReference type="GO" id="GO:0003677">
    <property type="term" value="F:DNA binding"/>
    <property type="evidence" value="ECO:0007669"/>
    <property type="project" value="UniProtKB-KW"/>
</dbReference>
<dbReference type="GO" id="GO:0006260">
    <property type="term" value="P:DNA replication"/>
    <property type="evidence" value="ECO:0007669"/>
    <property type="project" value="InterPro"/>
</dbReference>
<dbReference type="GO" id="GO:0000725">
    <property type="term" value="P:recombinational repair"/>
    <property type="evidence" value="ECO:0007669"/>
    <property type="project" value="TreeGrafter"/>
</dbReference>
<dbReference type="CDD" id="cd17932">
    <property type="entry name" value="DEXQc_UvrD"/>
    <property type="match status" value="1"/>
</dbReference>
<dbReference type="CDD" id="cd18807">
    <property type="entry name" value="SF1_C_UvrD"/>
    <property type="match status" value="1"/>
</dbReference>
<dbReference type="FunFam" id="1.10.10.160:FF:000001">
    <property type="entry name" value="ATP-dependent DNA helicase"/>
    <property type="match status" value="1"/>
</dbReference>
<dbReference type="FunFam" id="1.10.486.10:FF:000003">
    <property type="entry name" value="ATP-dependent DNA helicase"/>
    <property type="match status" value="1"/>
</dbReference>
<dbReference type="Gene3D" id="1.10.10.160">
    <property type="match status" value="1"/>
</dbReference>
<dbReference type="Gene3D" id="3.40.50.300">
    <property type="entry name" value="P-loop containing nucleotide triphosphate hydrolases"/>
    <property type="match status" value="2"/>
</dbReference>
<dbReference type="Gene3D" id="1.10.486.10">
    <property type="entry name" value="PCRA, domain 4"/>
    <property type="match status" value="1"/>
</dbReference>
<dbReference type="InterPro" id="IPR005751">
    <property type="entry name" value="ATP-dep_DNA_helicase_PcrA"/>
</dbReference>
<dbReference type="InterPro" id="IPR013986">
    <property type="entry name" value="DExx_box_DNA_helicase_dom_sf"/>
</dbReference>
<dbReference type="InterPro" id="IPR014017">
    <property type="entry name" value="DNA_helicase_UvrD-like_C"/>
</dbReference>
<dbReference type="InterPro" id="IPR000212">
    <property type="entry name" value="DNA_helicase_UvrD/REP"/>
</dbReference>
<dbReference type="InterPro" id="IPR027417">
    <property type="entry name" value="P-loop_NTPase"/>
</dbReference>
<dbReference type="InterPro" id="IPR014016">
    <property type="entry name" value="UvrD-like_ATP-bd"/>
</dbReference>
<dbReference type="NCBIfam" id="TIGR01073">
    <property type="entry name" value="pcrA"/>
    <property type="match status" value="1"/>
</dbReference>
<dbReference type="PANTHER" id="PTHR11070:SF2">
    <property type="entry name" value="ATP-DEPENDENT DNA HELICASE SRS2"/>
    <property type="match status" value="1"/>
</dbReference>
<dbReference type="PANTHER" id="PTHR11070">
    <property type="entry name" value="UVRD / RECB / PCRA DNA HELICASE FAMILY MEMBER"/>
    <property type="match status" value="1"/>
</dbReference>
<dbReference type="Pfam" id="PF21196">
    <property type="entry name" value="PcrA_UvrD_tudor"/>
    <property type="match status" value="1"/>
</dbReference>
<dbReference type="Pfam" id="PF00580">
    <property type="entry name" value="UvrD-helicase"/>
    <property type="match status" value="1"/>
</dbReference>
<dbReference type="Pfam" id="PF13361">
    <property type="entry name" value="UvrD_C"/>
    <property type="match status" value="1"/>
</dbReference>
<dbReference type="SUPFAM" id="SSF52540">
    <property type="entry name" value="P-loop containing nucleoside triphosphate hydrolases"/>
    <property type="match status" value="1"/>
</dbReference>
<dbReference type="PROSITE" id="PS51198">
    <property type="entry name" value="UVRD_HELICASE_ATP_BIND"/>
    <property type="match status" value="1"/>
</dbReference>
<dbReference type="PROSITE" id="PS51217">
    <property type="entry name" value="UVRD_HELICASE_CTER"/>
    <property type="match status" value="1"/>
</dbReference>
<protein>
    <recommendedName>
        <fullName>ATP-dependent DNA helicase PcrA</fullName>
        <ecNumber>5.6.2.4</ecNumber>
    </recommendedName>
    <alternativeName>
        <fullName evidence="5">DNA 3'-5' helicase PcrA</fullName>
    </alternativeName>
</protein>
<gene>
    <name type="primary">pcrA</name>
    <name type="ordered locus">SAV1905</name>
</gene>
<keyword id="KW-0067">ATP-binding</keyword>
<keyword id="KW-0238">DNA-binding</keyword>
<keyword id="KW-0347">Helicase</keyword>
<keyword id="KW-0378">Hydrolase</keyword>
<keyword id="KW-0413">Isomerase</keyword>
<keyword id="KW-0547">Nucleotide-binding</keyword>
<organism>
    <name type="scientific">Staphylococcus aureus (strain Mu50 / ATCC 700699)</name>
    <dbReference type="NCBI Taxonomy" id="158878"/>
    <lineage>
        <taxon>Bacteria</taxon>
        <taxon>Bacillati</taxon>
        <taxon>Bacillota</taxon>
        <taxon>Bacilli</taxon>
        <taxon>Bacillales</taxon>
        <taxon>Staphylococcaceae</taxon>
        <taxon>Staphylococcus</taxon>
    </lineage>
</organism>
<name>PCRA_STAAM</name>
<evidence type="ECO:0000250" key="1"/>
<evidence type="ECO:0000255" key="2">
    <source>
        <dbReference type="PROSITE-ProRule" id="PRU00560"/>
    </source>
</evidence>
<evidence type="ECO:0000255" key="3">
    <source>
        <dbReference type="PROSITE-ProRule" id="PRU00617"/>
    </source>
</evidence>
<evidence type="ECO:0000256" key="4">
    <source>
        <dbReference type="SAM" id="MobiDB-lite"/>
    </source>
</evidence>
<evidence type="ECO:0000305" key="5"/>
<reference key="1">
    <citation type="journal article" date="2001" name="Lancet">
        <title>Whole genome sequencing of meticillin-resistant Staphylococcus aureus.</title>
        <authorList>
            <person name="Kuroda M."/>
            <person name="Ohta T."/>
            <person name="Uchiyama I."/>
            <person name="Baba T."/>
            <person name="Yuzawa H."/>
            <person name="Kobayashi I."/>
            <person name="Cui L."/>
            <person name="Oguchi A."/>
            <person name="Aoki K."/>
            <person name="Nagai Y."/>
            <person name="Lian J.-Q."/>
            <person name="Ito T."/>
            <person name="Kanamori M."/>
            <person name="Matsumaru H."/>
            <person name="Maruyama A."/>
            <person name="Murakami H."/>
            <person name="Hosoyama A."/>
            <person name="Mizutani-Ui Y."/>
            <person name="Takahashi N.K."/>
            <person name="Sawano T."/>
            <person name="Inoue R."/>
            <person name="Kaito C."/>
            <person name="Sekimizu K."/>
            <person name="Hirakawa H."/>
            <person name="Kuhara S."/>
            <person name="Goto S."/>
            <person name="Yabuzaki J."/>
            <person name="Kanehisa M."/>
            <person name="Yamashita A."/>
            <person name="Oshima K."/>
            <person name="Furuya K."/>
            <person name="Yoshino C."/>
            <person name="Shiba T."/>
            <person name="Hattori M."/>
            <person name="Ogasawara N."/>
            <person name="Hayashi H."/>
            <person name="Hiramatsu K."/>
        </authorList>
    </citation>
    <scope>NUCLEOTIDE SEQUENCE [LARGE SCALE GENOMIC DNA]</scope>
    <source>
        <strain>Mu50 / ATCC 700699</strain>
    </source>
</reference>
<comment type="function">
    <text evidence="1">Essential helicase.</text>
</comment>
<comment type="catalytic activity">
    <reaction>
        <text>Couples ATP hydrolysis with the unwinding of duplex DNA by translocating in the 3'-5' direction.</text>
        <dbReference type="EC" id="5.6.2.4"/>
    </reaction>
</comment>
<comment type="catalytic activity">
    <reaction>
        <text>ATP + H2O = ADP + phosphate + H(+)</text>
        <dbReference type="Rhea" id="RHEA:13065"/>
        <dbReference type="ChEBI" id="CHEBI:15377"/>
        <dbReference type="ChEBI" id="CHEBI:15378"/>
        <dbReference type="ChEBI" id="CHEBI:30616"/>
        <dbReference type="ChEBI" id="CHEBI:43474"/>
        <dbReference type="ChEBI" id="CHEBI:456216"/>
        <dbReference type="EC" id="5.6.2.4"/>
    </reaction>
</comment>
<comment type="similarity">
    <text evidence="5">Belongs to the helicase family. UvrD subfamily.</text>
</comment>
<proteinExistence type="inferred from homology"/>
<feature type="chain" id="PRO_0000102057" description="ATP-dependent DNA helicase PcrA">
    <location>
        <begin position="1"/>
        <end position="730"/>
    </location>
</feature>
<feature type="domain" description="UvrD-like helicase ATP-binding" evidence="2">
    <location>
        <begin position="6"/>
        <end position="285"/>
    </location>
</feature>
<feature type="domain" description="UvrD-like helicase C-terminal" evidence="3">
    <location>
        <begin position="286"/>
        <end position="560"/>
    </location>
</feature>
<feature type="region of interest" description="Disordered" evidence="4">
    <location>
        <begin position="641"/>
        <end position="678"/>
    </location>
</feature>
<feature type="compositionally biased region" description="Polar residues" evidence="4">
    <location>
        <begin position="641"/>
        <end position="651"/>
    </location>
</feature>
<feature type="compositionally biased region" description="Polar residues" evidence="4">
    <location>
        <begin position="663"/>
        <end position="678"/>
    </location>
</feature>
<feature type="binding site" evidence="2">
    <location>
        <begin position="30"/>
        <end position="35"/>
    </location>
    <ligand>
        <name>ATP</name>
        <dbReference type="ChEBI" id="CHEBI:30616"/>
    </ligand>
</feature>
<feature type="binding site" evidence="1">
    <location>
        <position position="283"/>
    </location>
    <ligand>
        <name>ATP</name>
        <dbReference type="ChEBI" id="CHEBI:30616"/>
    </ligand>
</feature>
<sequence length="730" mass="84047">MNALLNHMNTEQSEAVKTTEGPLLIMAGAGSGKTRVLTHRIAYLLDEKDVSPYNVLAITFTNKAAREMKERVQKLVGDQAEVIWMSTFHSMCVRILRRDADRIGIERNFTIIDPTDQKSVIKDVLKNENIDSKKFEPRMFIGAISNLKNELKTPADAQKEATDYHSQMVATVYSGYQRQLSRNEALDFDDLIMTTINLFERVPEVLEYYQNKFQYIHVDEYQDTNKAQYTLVKLLASKFKNLCVVGDSDQSIYGWRGADIQNILSFEKDYPEANTIFLEQNYRSTKTILNAANEVIKNNSERKPKGLWTANTNGEKIHYYEAMTERDEAEFVIREIMKHQRNGKKYQDMAILYRTNAQSRVLEETFMKSNMPYTMVGGQKFYDRKEIKDLLSYLRIIANSNDDISLQRIINVPKRGVGPSSVEKVQNYALQNNISMFDALGEADFIGLSKKVTQECLNFYELIQSLIKEQEFLEIHEIVDEVLQKSGYREMLERENTLESRSRLENIDEFMSVPKDYEENTPLEEQSLINFLTDLSLVADIDEADTENGVTLMTMHSAKGLEFPIVFIMGMEESLFPHIRAIKSEDDHEMQEERRICYVAITRAEEVLYITHATSRMLFGRPQSNMPSRFLKEIPESLLENHSSGKRQTIQPKAKPFAKRGFSQRTTSTKKQVSSSDWNVGDKVMHKAWGEGMVSNVNEKNGSIELDIIFKSQGPKRLLAQFAPIEKKED</sequence>
<accession>P64318</accession>
<accession>Q99SY2</accession>